<comment type="function">
    <text evidence="1 9 10 11 12">E3 ubiquitin-protein ligase activity (By similarity). During embryonic and larval development, regulates the pattern of axonal projections of class IV nociceptive sensory neurons (C4da) downstream of netrin receptor fra (PubMed:21338947, PubMed:22084112). Regulates fine-scale topography of C4da axon terminals upon neuronal activity (PubMed:24746793). During eye development, consolidates the attachment of R8 photoreceptor growth cones to the target medulla layer, probably downstream of fra (PubMed:27743477).</text>
</comment>
<comment type="catalytic activity">
    <reaction evidence="1">
        <text>S-ubiquitinyl-[E2 ubiquitin-conjugating enzyme]-L-cysteine + [acceptor protein]-L-lysine = [E2 ubiquitin-conjugating enzyme]-L-cysteine + N(6)-ubiquitinyl-[acceptor protein]-L-lysine.</text>
        <dbReference type="EC" id="2.3.2.27"/>
    </reaction>
</comment>
<comment type="pathway">
    <text evidence="1">Protein modification; protein ubiquitination.</text>
</comment>
<comment type="subunit">
    <text evidence="10">Interacts (via fibronectin type-III domain) with pico. Interacts (via SPRY domain) with netrin receptor fra.</text>
</comment>
<comment type="subcellular location">
    <subcellularLocation>
        <location evidence="10">Cell projection</location>
        <location evidence="10">Axon</location>
    </subcellularLocation>
    <subcellularLocation>
        <location evidence="10">Perikaryon</location>
    </subcellularLocation>
    <text evidence="10">Colocalizes with fra and pico.</text>
</comment>
<comment type="alternative products">
    <event type="alternative splicing"/>
    <isoform>
        <id>M9MRI4-1</id>
        <name evidence="17">B</name>
        <sequence type="displayed"/>
    </isoform>
    <isoform>
        <id>M9MRI4-2</id>
        <name evidence="17">A</name>
        <sequence type="described" ref="VSP_058962"/>
    </isoform>
</comment>
<comment type="developmental stage">
    <text evidence="9 10 11">Detected at embryonic stages 13-14 (PubMed:22084112). During embryonic and larval development, expressed in the ventral nerve cord (VNC) in a subset of peripheral nervous system neurons including C4da (at protein level) (PubMed:21338947, PubMed:22084112, PubMed:24746793).</text>
</comment>
<comment type="induction">
    <text evidence="11">Induced by neuronal activity in C4da neurons.</text>
</comment>
<comment type="domain">
    <text evidence="10">The fibronectin type-III, SPRY and coil-coil domains are necessary for C4da axon patterning.</text>
</comment>
<comment type="disruption phenotype">
    <text evidence="9 10 11 12">Defective axonal patterning of terminal processes in class IV nociceptive sensory neurons (C4da), including defective contralateral projections in ddaC and vdaB neurons, during larval development (PubMed:21338947, PubMed:22084112, PubMed:24746793). Defective larval locomotion behavior (PubMed:22084112). Defective targeting of R8 photoreceptor growth cones to the medulla layer during eye development (PubMed:27743477).</text>
</comment>
<comment type="similarity">
    <text evidence="14">Belongs to the TRIM/RBCC family.</text>
</comment>
<dbReference type="EC" id="2.3.2.27" evidence="1"/>
<dbReference type="EMBL" id="AY251387">
    <property type="protein sequence ID" value="AAP51207.1"/>
    <property type="molecule type" value="mRNA"/>
</dbReference>
<dbReference type="EMBL" id="AE014134">
    <property type="protein sequence ID" value="AAF52977.3"/>
    <property type="molecule type" value="Genomic_DNA"/>
</dbReference>
<dbReference type="EMBL" id="AE014134">
    <property type="protein sequence ID" value="ADV37036.1"/>
    <property type="molecule type" value="Genomic_DNA"/>
</dbReference>
<dbReference type="EMBL" id="BT003527">
    <property type="protein sequence ID" value="AAO39531.1"/>
    <property type="molecule type" value="mRNA"/>
</dbReference>
<dbReference type="RefSeq" id="NP_001188786.1">
    <molecule id="M9MRI4-1"/>
    <property type="nucleotide sequence ID" value="NM_001201857.2"/>
</dbReference>
<dbReference type="RefSeq" id="NP_723600.2">
    <molecule id="M9MRI4-2"/>
    <property type="nucleotide sequence ID" value="NM_164935.3"/>
</dbReference>
<dbReference type="FunCoup" id="M9MRI4">
    <property type="interactions" value="106"/>
</dbReference>
<dbReference type="IntAct" id="M9MRI4">
    <property type="interactions" value="3"/>
</dbReference>
<dbReference type="STRING" id="7227.FBpp0293057"/>
<dbReference type="PaxDb" id="7227-FBpp0293057"/>
<dbReference type="DNASU" id="34453"/>
<dbReference type="EnsemblMetazoa" id="FBtr0080096">
    <molecule id="M9MRI4-2"/>
    <property type="protein sequence ID" value="FBpp0079685"/>
    <property type="gene ID" value="FBgn0051721"/>
</dbReference>
<dbReference type="EnsemblMetazoa" id="FBtr0304114">
    <molecule id="M9MRI4-1"/>
    <property type="protein sequence ID" value="FBpp0293057"/>
    <property type="gene ID" value="FBgn0051721"/>
</dbReference>
<dbReference type="GeneID" id="34453"/>
<dbReference type="KEGG" id="dme:Dmel_CG31721"/>
<dbReference type="UCSC" id="CG31721-RA">
    <property type="organism name" value="d. melanogaster"/>
</dbReference>
<dbReference type="AGR" id="FB:FBgn0051721"/>
<dbReference type="CTD" id="114088"/>
<dbReference type="FlyBase" id="FBgn0051721">
    <property type="gene designation" value="Trim9"/>
</dbReference>
<dbReference type="VEuPathDB" id="VectorBase:FBgn0051721"/>
<dbReference type="eggNOG" id="KOG4367">
    <property type="taxonomic scope" value="Eukaryota"/>
</dbReference>
<dbReference type="GeneTree" id="ENSGT00940000170097"/>
<dbReference type="InParanoid" id="M9MRI4"/>
<dbReference type="OMA" id="PDTICTI"/>
<dbReference type="OrthoDB" id="295536at2759"/>
<dbReference type="PhylomeDB" id="M9MRI4"/>
<dbReference type="Reactome" id="R-DME-983168">
    <property type="pathway name" value="Antigen processing: Ubiquitination &amp; Proteasome degradation"/>
</dbReference>
<dbReference type="SignaLink" id="M9MRI4"/>
<dbReference type="UniPathway" id="UPA00143"/>
<dbReference type="BioGRID-ORCS" id="34453">
    <property type="hits" value="0 hits in 3 CRISPR screens"/>
</dbReference>
<dbReference type="ChiTaRS" id="Trim9">
    <property type="organism name" value="fly"/>
</dbReference>
<dbReference type="GenomeRNAi" id="34453"/>
<dbReference type="PRO" id="PR:M9MRI4"/>
<dbReference type="Proteomes" id="UP000000803">
    <property type="component" value="Chromosome 2L"/>
</dbReference>
<dbReference type="Bgee" id="FBgn0051721">
    <property type="expression patterns" value="Expressed in adult enteroendocrine cell in post-embryonic organism and 172 other cell types or tissues"/>
</dbReference>
<dbReference type="ExpressionAtlas" id="M9MRI4">
    <property type="expression patterns" value="baseline and differential"/>
</dbReference>
<dbReference type="GO" id="GO:0044295">
    <property type="term" value="C:axonal growth cone"/>
    <property type="evidence" value="ECO:0000315"/>
    <property type="project" value="UniProtKB"/>
</dbReference>
<dbReference type="GO" id="GO:0043005">
    <property type="term" value="C:neuron projection"/>
    <property type="evidence" value="ECO:0000318"/>
    <property type="project" value="GO_Central"/>
</dbReference>
<dbReference type="GO" id="GO:0043204">
    <property type="term" value="C:perikaryon"/>
    <property type="evidence" value="ECO:0007669"/>
    <property type="project" value="UniProtKB-SubCell"/>
</dbReference>
<dbReference type="GO" id="GO:0061630">
    <property type="term" value="F:ubiquitin protein ligase activity"/>
    <property type="evidence" value="ECO:0000250"/>
    <property type="project" value="FlyBase"/>
</dbReference>
<dbReference type="GO" id="GO:0008270">
    <property type="term" value="F:zinc ion binding"/>
    <property type="evidence" value="ECO:0000255"/>
    <property type="project" value="FlyBase"/>
</dbReference>
<dbReference type="GO" id="GO:0007411">
    <property type="term" value="P:axon guidance"/>
    <property type="evidence" value="ECO:0000315"/>
    <property type="project" value="FlyBase"/>
</dbReference>
<dbReference type="GO" id="GO:0016199">
    <property type="term" value="P:axon midline choice point recognition"/>
    <property type="evidence" value="ECO:0000315"/>
    <property type="project" value="UniProtKB"/>
</dbReference>
<dbReference type="GO" id="GO:0007409">
    <property type="term" value="P:axonogenesis"/>
    <property type="evidence" value="ECO:0000315"/>
    <property type="project" value="FlyBase"/>
</dbReference>
<dbReference type="GO" id="GO:0048749">
    <property type="term" value="P:compound eye development"/>
    <property type="evidence" value="ECO:0000315"/>
    <property type="project" value="UniProtKB"/>
</dbReference>
<dbReference type="GO" id="GO:0045820">
    <property type="term" value="P:negative regulation of glycolytic process"/>
    <property type="evidence" value="ECO:0000316"/>
    <property type="project" value="FlyBase"/>
</dbReference>
<dbReference type="GO" id="GO:0038007">
    <property type="term" value="P:netrin-activated signaling pathway"/>
    <property type="evidence" value="ECO:0000315"/>
    <property type="project" value="UniProtKB"/>
</dbReference>
<dbReference type="GO" id="GO:0048936">
    <property type="term" value="P:peripheral nervous system neuron axonogenesis"/>
    <property type="evidence" value="ECO:0000315"/>
    <property type="project" value="UniProtKB"/>
</dbReference>
<dbReference type="GO" id="GO:0043161">
    <property type="term" value="P:proteasome-mediated ubiquitin-dependent protein catabolic process"/>
    <property type="evidence" value="ECO:0000250"/>
    <property type="project" value="FlyBase"/>
</dbReference>
<dbReference type="GO" id="GO:0016567">
    <property type="term" value="P:protein ubiquitination"/>
    <property type="evidence" value="ECO:0007669"/>
    <property type="project" value="UniProtKB-UniPathway"/>
</dbReference>
<dbReference type="GO" id="GO:0050770">
    <property type="term" value="P:regulation of axonogenesis"/>
    <property type="evidence" value="ECO:0000315"/>
    <property type="project" value="UniProtKB"/>
</dbReference>
<dbReference type="GO" id="GO:0090325">
    <property type="term" value="P:regulation of locomotion involved in locomotory behavior"/>
    <property type="evidence" value="ECO:0000315"/>
    <property type="project" value="UniProtKB"/>
</dbReference>
<dbReference type="CDD" id="cd19803">
    <property type="entry name" value="Bbox1_TRIM9-like_C-I"/>
    <property type="match status" value="1"/>
</dbReference>
<dbReference type="CDD" id="cd19764">
    <property type="entry name" value="Bbox2_TRIM9-like"/>
    <property type="match status" value="1"/>
</dbReference>
<dbReference type="CDD" id="cd00063">
    <property type="entry name" value="FN3"/>
    <property type="match status" value="1"/>
</dbReference>
<dbReference type="CDD" id="cd16576">
    <property type="entry name" value="RING-HC_TRIM9-like_C-I"/>
    <property type="match status" value="1"/>
</dbReference>
<dbReference type="CDD" id="cd12889">
    <property type="entry name" value="SPRY_PRY_TRIM67_9"/>
    <property type="match status" value="1"/>
</dbReference>
<dbReference type="FunFam" id="2.60.120.920:FF:000009">
    <property type="entry name" value="E3 ubiquitin-protein ligase TRIM9 isoform X1"/>
    <property type="match status" value="1"/>
</dbReference>
<dbReference type="FunFam" id="2.60.40.10:FF:000178">
    <property type="entry name" value="E3 ubiquitin-protein ligase TRIM9 isoform X1"/>
    <property type="match status" value="1"/>
</dbReference>
<dbReference type="FunFam" id="1.20.5.170:FF:000017">
    <property type="entry name" value="Putative E3 ubiquitin-protein ligase TRIM9"/>
    <property type="match status" value="1"/>
</dbReference>
<dbReference type="FunFam" id="3.30.160.60:FF:002546">
    <property type="entry name" value="Uncharacterized protein, isoform B"/>
    <property type="match status" value="1"/>
</dbReference>
<dbReference type="Gene3D" id="1.20.5.170">
    <property type="match status" value="1"/>
</dbReference>
<dbReference type="Gene3D" id="2.60.120.920">
    <property type="match status" value="1"/>
</dbReference>
<dbReference type="Gene3D" id="4.10.830.40">
    <property type="match status" value="1"/>
</dbReference>
<dbReference type="Gene3D" id="3.30.160.60">
    <property type="entry name" value="Classic Zinc Finger"/>
    <property type="match status" value="1"/>
</dbReference>
<dbReference type="Gene3D" id="2.60.40.10">
    <property type="entry name" value="Immunoglobulins"/>
    <property type="match status" value="1"/>
</dbReference>
<dbReference type="Gene3D" id="3.30.40.10">
    <property type="entry name" value="Zinc/RING finger domain, C3HC4 (zinc finger)"/>
    <property type="match status" value="1"/>
</dbReference>
<dbReference type="InterPro" id="IPR001870">
    <property type="entry name" value="B30.2/SPRY"/>
</dbReference>
<dbReference type="InterPro" id="IPR043136">
    <property type="entry name" value="B30.2/SPRY_sf"/>
</dbReference>
<dbReference type="InterPro" id="IPR003649">
    <property type="entry name" value="Bbox_C"/>
</dbReference>
<dbReference type="InterPro" id="IPR013320">
    <property type="entry name" value="ConA-like_dom_sf"/>
</dbReference>
<dbReference type="InterPro" id="IPR017903">
    <property type="entry name" value="COS_domain"/>
</dbReference>
<dbReference type="InterPro" id="IPR050617">
    <property type="entry name" value="E3_ligase_FN3/SPRY"/>
</dbReference>
<dbReference type="InterPro" id="IPR003961">
    <property type="entry name" value="FN3_dom"/>
</dbReference>
<dbReference type="InterPro" id="IPR036116">
    <property type="entry name" value="FN3_sf"/>
</dbReference>
<dbReference type="InterPro" id="IPR013783">
    <property type="entry name" value="Ig-like_fold"/>
</dbReference>
<dbReference type="InterPro" id="IPR003877">
    <property type="entry name" value="SPRY_dom"/>
</dbReference>
<dbReference type="InterPro" id="IPR000315">
    <property type="entry name" value="Znf_B-box"/>
</dbReference>
<dbReference type="InterPro" id="IPR001841">
    <property type="entry name" value="Znf_RING"/>
</dbReference>
<dbReference type="InterPro" id="IPR013083">
    <property type="entry name" value="Znf_RING/FYVE/PHD"/>
</dbReference>
<dbReference type="PANTHER" id="PTHR24099">
    <property type="entry name" value="E3 UBIQUITIN-PROTEIN LIGASE TRIM36-RELATED"/>
    <property type="match status" value="1"/>
</dbReference>
<dbReference type="PANTHER" id="PTHR24099:SF15">
    <property type="entry name" value="E3 UBIQUITIN-PROTEIN LIGASE TRIM9"/>
    <property type="match status" value="1"/>
</dbReference>
<dbReference type="Pfam" id="PF00041">
    <property type="entry name" value="fn3"/>
    <property type="match status" value="1"/>
</dbReference>
<dbReference type="Pfam" id="PF00622">
    <property type="entry name" value="SPRY"/>
    <property type="match status" value="1"/>
</dbReference>
<dbReference type="Pfam" id="PF00643">
    <property type="entry name" value="zf-B_box"/>
    <property type="match status" value="1"/>
</dbReference>
<dbReference type="SMART" id="SM00502">
    <property type="entry name" value="BBC"/>
    <property type="match status" value="1"/>
</dbReference>
<dbReference type="SMART" id="SM00336">
    <property type="entry name" value="BBOX"/>
    <property type="match status" value="2"/>
</dbReference>
<dbReference type="SMART" id="SM00060">
    <property type="entry name" value="FN3"/>
    <property type="match status" value="1"/>
</dbReference>
<dbReference type="SMART" id="SM00184">
    <property type="entry name" value="RING"/>
    <property type="match status" value="1"/>
</dbReference>
<dbReference type="SMART" id="SM00449">
    <property type="entry name" value="SPRY"/>
    <property type="match status" value="1"/>
</dbReference>
<dbReference type="SUPFAM" id="SSF57845">
    <property type="entry name" value="B-box zinc-binding domain"/>
    <property type="match status" value="1"/>
</dbReference>
<dbReference type="SUPFAM" id="SSF49899">
    <property type="entry name" value="Concanavalin A-like lectins/glucanases"/>
    <property type="match status" value="1"/>
</dbReference>
<dbReference type="SUPFAM" id="SSF49265">
    <property type="entry name" value="Fibronectin type III"/>
    <property type="match status" value="1"/>
</dbReference>
<dbReference type="SUPFAM" id="SSF57850">
    <property type="entry name" value="RING/U-box"/>
    <property type="match status" value="1"/>
</dbReference>
<dbReference type="PROSITE" id="PS50188">
    <property type="entry name" value="B302_SPRY"/>
    <property type="match status" value="1"/>
</dbReference>
<dbReference type="PROSITE" id="PS51262">
    <property type="entry name" value="COS"/>
    <property type="match status" value="1"/>
</dbReference>
<dbReference type="PROSITE" id="PS50853">
    <property type="entry name" value="FN3"/>
    <property type="match status" value="1"/>
</dbReference>
<dbReference type="PROSITE" id="PS50119">
    <property type="entry name" value="ZF_BBOX"/>
    <property type="match status" value="2"/>
</dbReference>
<dbReference type="PROSITE" id="PS00518">
    <property type="entry name" value="ZF_RING_1"/>
    <property type="match status" value="1"/>
</dbReference>
<accession>M9MRI4</accession>
<accession>Q86P21</accession>
<accession>Q9VKT3</accession>
<evidence type="ECO:0000250" key="1">
    <source>
        <dbReference type="UniProtKB" id="Q9C026"/>
    </source>
</evidence>
<evidence type="ECO:0000255" key="2"/>
<evidence type="ECO:0000255" key="3">
    <source>
        <dbReference type="PROSITE-ProRule" id="PRU00024"/>
    </source>
</evidence>
<evidence type="ECO:0000255" key="4">
    <source>
        <dbReference type="PROSITE-ProRule" id="PRU00175"/>
    </source>
</evidence>
<evidence type="ECO:0000255" key="5">
    <source>
        <dbReference type="PROSITE-ProRule" id="PRU00316"/>
    </source>
</evidence>
<evidence type="ECO:0000255" key="6">
    <source>
        <dbReference type="PROSITE-ProRule" id="PRU00548"/>
    </source>
</evidence>
<evidence type="ECO:0000255" key="7">
    <source>
        <dbReference type="PROSITE-ProRule" id="PRU00586"/>
    </source>
</evidence>
<evidence type="ECO:0000256" key="8">
    <source>
        <dbReference type="SAM" id="MobiDB-lite"/>
    </source>
</evidence>
<evidence type="ECO:0000269" key="9">
    <source>
    </source>
</evidence>
<evidence type="ECO:0000269" key="10">
    <source>
    </source>
</evidence>
<evidence type="ECO:0000269" key="11">
    <source>
    </source>
</evidence>
<evidence type="ECO:0000269" key="12">
    <source>
    </source>
</evidence>
<evidence type="ECO:0000303" key="13">
    <source>
    </source>
</evidence>
<evidence type="ECO:0000305" key="14"/>
<evidence type="ECO:0000312" key="15">
    <source>
        <dbReference type="EMBL" id="AAO39531.1"/>
    </source>
</evidence>
<evidence type="ECO:0000312" key="16">
    <source>
        <dbReference type="EMBL" id="AAP51207.1"/>
    </source>
</evidence>
<evidence type="ECO:0000312" key="17">
    <source>
        <dbReference type="FlyBase" id="FBgn0051721"/>
    </source>
</evidence>
<evidence type="ECO:0000312" key="18">
    <source>
        <dbReference type="Proteomes" id="UP000000803"/>
    </source>
</evidence>
<feature type="chain" id="PRO_0000440178" description="E3 ubiquitin-protein ligase TRIM9" evidence="14">
    <location>
        <begin position="1"/>
        <end position="740"/>
    </location>
</feature>
<feature type="domain" description="COS" evidence="7">
    <location>
        <begin position="399"/>
        <end position="459"/>
    </location>
</feature>
<feature type="domain" description="Fibronectin type-III" evidence="5">
    <location>
        <begin position="474"/>
        <end position="567"/>
    </location>
</feature>
<feature type="domain" description="B30.2/SPRY" evidence="6">
    <location>
        <begin position="549"/>
        <end position="736"/>
    </location>
</feature>
<feature type="zinc finger region" description="RING-type; degenerate" evidence="4">
    <location>
        <begin position="7"/>
        <end position="30"/>
    </location>
</feature>
<feature type="zinc finger region" description="B box-type 1; atypical" evidence="3">
    <location>
        <begin position="195"/>
        <end position="244"/>
    </location>
</feature>
<feature type="zinc finger region" description="B box-type 2" evidence="3">
    <location>
        <begin position="250"/>
        <end position="291"/>
    </location>
</feature>
<feature type="region of interest" description="Disordered" evidence="8">
    <location>
        <begin position="64"/>
        <end position="114"/>
    </location>
</feature>
<feature type="coiled-coil region" evidence="2">
    <location>
        <begin position="294"/>
        <end position="324"/>
    </location>
</feature>
<feature type="compositionally biased region" description="Gly residues" evidence="8">
    <location>
        <begin position="64"/>
        <end position="73"/>
    </location>
</feature>
<feature type="compositionally biased region" description="Low complexity" evidence="8">
    <location>
        <begin position="74"/>
        <end position="105"/>
    </location>
</feature>
<feature type="binding site" evidence="3">
    <location>
        <position position="200"/>
    </location>
    <ligand>
        <name>Zn(2+)</name>
        <dbReference type="ChEBI" id="CHEBI:29105"/>
        <label>1</label>
    </ligand>
</feature>
<feature type="binding site" evidence="3">
    <location>
        <position position="203"/>
    </location>
    <ligand>
        <name>Zn(2+)</name>
        <dbReference type="ChEBI" id="CHEBI:29105"/>
        <label>1</label>
    </ligand>
</feature>
<feature type="binding site" evidence="3">
    <location>
        <position position="225"/>
    </location>
    <ligand>
        <name>Zn(2+)</name>
        <dbReference type="ChEBI" id="CHEBI:29105"/>
        <label>1</label>
    </ligand>
</feature>
<feature type="binding site" evidence="3">
    <location>
        <position position="230"/>
    </location>
    <ligand>
        <name>Zn(2+)</name>
        <dbReference type="ChEBI" id="CHEBI:29105"/>
        <label>1</label>
    </ligand>
</feature>
<feature type="binding site" evidence="3">
    <location>
        <position position="255"/>
    </location>
    <ligand>
        <name>Zn(2+)</name>
        <dbReference type="ChEBI" id="CHEBI:29105"/>
        <label>2</label>
    </ligand>
</feature>
<feature type="binding site" evidence="3">
    <location>
        <position position="258"/>
    </location>
    <ligand>
        <name>Zn(2+)</name>
        <dbReference type="ChEBI" id="CHEBI:29105"/>
        <label>2</label>
    </ligand>
</feature>
<feature type="binding site" evidence="3">
    <location>
        <position position="277"/>
    </location>
    <ligand>
        <name>Zn(2+)</name>
        <dbReference type="ChEBI" id="CHEBI:29105"/>
        <label>2</label>
    </ligand>
</feature>
<feature type="binding site" evidence="3">
    <location>
        <position position="283"/>
    </location>
    <ligand>
        <name>Zn(2+)</name>
        <dbReference type="ChEBI" id="CHEBI:29105"/>
        <label>2</label>
    </ligand>
</feature>
<feature type="splice variant" id="VSP_058962" description="In isoform A." evidence="14">
    <location>
        <begin position="464"/>
        <end position="474"/>
    </location>
</feature>
<proteinExistence type="evidence at protein level"/>
<reference evidence="16" key="1">
    <citation type="journal article" date="2006" name="J. Biol. Chem.">
        <title>Subclassification of the RBCC/TRIM superfamily reveals a novel motif necessary for microtubule binding.</title>
        <authorList>
            <person name="Short K.M."/>
            <person name="Cox T.C."/>
        </authorList>
    </citation>
    <scope>NUCLEOTIDE SEQUENCE [MRNA] (ISOFORM A)</scope>
</reference>
<reference evidence="18" key="2">
    <citation type="journal article" date="2000" name="Science">
        <title>The genome sequence of Drosophila melanogaster.</title>
        <authorList>
            <person name="Adams M.D."/>
            <person name="Celniker S.E."/>
            <person name="Holt R.A."/>
            <person name="Evans C.A."/>
            <person name="Gocayne J.D."/>
            <person name="Amanatides P.G."/>
            <person name="Scherer S.E."/>
            <person name="Li P.W."/>
            <person name="Hoskins R.A."/>
            <person name="Galle R.F."/>
            <person name="George R.A."/>
            <person name="Lewis S.E."/>
            <person name="Richards S."/>
            <person name="Ashburner M."/>
            <person name="Henderson S.N."/>
            <person name="Sutton G.G."/>
            <person name="Wortman J.R."/>
            <person name="Yandell M.D."/>
            <person name="Zhang Q."/>
            <person name="Chen L.X."/>
            <person name="Brandon R.C."/>
            <person name="Rogers Y.-H.C."/>
            <person name="Blazej R.G."/>
            <person name="Champe M."/>
            <person name="Pfeiffer B.D."/>
            <person name="Wan K.H."/>
            <person name="Doyle C."/>
            <person name="Baxter E.G."/>
            <person name="Helt G."/>
            <person name="Nelson C.R."/>
            <person name="Miklos G.L.G."/>
            <person name="Abril J.F."/>
            <person name="Agbayani A."/>
            <person name="An H.-J."/>
            <person name="Andrews-Pfannkoch C."/>
            <person name="Baldwin D."/>
            <person name="Ballew R.M."/>
            <person name="Basu A."/>
            <person name="Baxendale J."/>
            <person name="Bayraktaroglu L."/>
            <person name="Beasley E.M."/>
            <person name="Beeson K.Y."/>
            <person name="Benos P.V."/>
            <person name="Berman B.P."/>
            <person name="Bhandari D."/>
            <person name="Bolshakov S."/>
            <person name="Borkova D."/>
            <person name="Botchan M.R."/>
            <person name="Bouck J."/>
            <person name="Brokstein P."/>
            <person name="Brottier P."/>
            <person name="Burtis K.C."/>
            <person name="Busam D.A."/>
            <person name="Butler H."/>
            <person name="Cadieu E."/>
            <person name="Center A."/>
            <person name="Chandra I."/>
            <person name="Cherry J.M."/>
            <person name="Cawley S."/>
            <person name="Dahlke C."/>
            <person name="Davenport L.B."/>
            <person name="Davies P."/>
            <person name="de Pablos B."/>
            <person name="Delcher A."/>
            <person name="Deng Z."/>
            <person name="Mays A.D."/>
            <person name="Dew I."/>
            <person name="Dietz S.M."/>
            <person name="Dodson K."/>
            <person name="Doup L.E."/>
            <person name="Downes M."/>
            <person name="Dugan-Rocha S."/>
            <person name="Dunkov B.C."/>
            <person name="Dunn P."/>
            <person name="Durbin K.J."/>
            <person name="Evangelista C.C."/>
            <person name="Ferraz C."/>
            <person name="Ferriera S."/>
            <person name="Fleischmann W."/>
            <person name="Fosler C."/>
            <person name="Gabrielian A.E."/>
            <person name="Garg N.S."/>
            <person name="Gelbart W.M."/>
            <person name="Glasser K."/>
            <person name="Glodek A."/>
            <person name="Gong F."/>
            <person name="Gorrell J.H."/>
            <person name="Gu Z."/>
            <person name="Guan P."/>
            <person name="Harris M."/>
            <person name="Harris N.L."/>
            <person name="Harvey D.A."/>
            <person name="Heiman T.J."/>
            <person name="Hernandez J.R."/>
            <person name="Houck J."/>
            <person name="Hostin D."/>
            <person name="Houston K.A."/>
            <person name="Howland T.J."/>
            <person name="Wei M.-H."/>
            <person name="Ibegwam C."/>
            <person name="Jalali M."/>
            <person name="Kalush F."/>
            <person name="Karpen G.H."/>
            <person name="Ke Z."/>
            <person name="Kennison J.A."/>
            <person name="Ketchum K.A."/>
            <person name="Kimmel B.E."/>
            <person name="Kodira C.D."/>
            <person name="Kraft C.L."/>
            <person name="Kravitz S."/>
            <person name="Kulp D."/>
            <person name="Lai Z."/>
            <person name="Lasko P."/>
            <person name="Lei Y."/>
            <person name="Levitsky A.A."/>
            <person name="Li J.H."/>
            <person name="Li Z."/>
            <person name="Liang Y."/>
            <person name="Lin X."/>
            <person name="Liu X."/>
            <person name="Mattei B."/>
            <person name="McIntosh T.C."/>
            <person name="McLeod M.P."/>
            <person name="McPherson D."/>
            <person name="Merkulov G."/>
            <person name="Milshina N.V."/>
            <person name="Mobarry C."/>
            <person name="Morris J."/>
            <person name="Moshrefi A."/>
            <person name="Mount S.M."/>
            <person name="Moy M."/>
            <person name="Murphy B."/>
            <person name="Murphy L."/>
            <person name="Muzny D.M."/>
            <person name="Nelson D.L."/>
            <person name="Nelson D.R."/>
            <person name="Nelson K.A."/>
            <person name="Nixon K."/>
            <person name="Nusskern D.R."/>
            <person name="Pacleb J.M."/>
            <person name="Palazzolo M."/>
            <person name="Pittman G.S."/>
            <person name="Pan S."/>
            <person name="Pollard J."/>
            <person name="Puri V."/>
            <person name="Reese M.G."/>
            <person name="Reinert K."/>
            <person name="Remington K."/>
            <person name="Saunders R.D.C."/>
            <person name="Scheeler F."/>
            <person name="Shen H."/>
            <person name="Shue B.C."/>
            <person name="Siden-Kiamos I."/>
            <person name="Simpson M."/>
            <person name="Skupski M.P."/>
            <person name="Smith T.J."/>
            <person name="Spier E."/>
            <person name="Spradling A.C."/>
            <person name="Stapleton M."/>
            <person name="Strong R."/>
            <person name="Sun E."/>
            <person name="Svirskas R."/>
            <person name="Tector C."/>
            <person name="Turner R."/>
            <person name="Venter E."/>
            <person name="Wang A.H."/>
            <person name="Wang X."/>
            <person name="Wang Z.-Y."/>
            <person name="Wassarman D.A."/>
            <person name="Weinstock G.M."/>
            <person name="Weissenbach J."/>
            <person name="Williams S.M."/>
            <person name="Woodage T."/>
            <person name="Worley K.C."/>
            <person name="Wu D."/>
            <person name="Yang S."/>
            <person name="Yao Q.A."/>
            <person name="Ye J."/>
            <person name="Yeh R.-F."/>
            <person name="Zaveri J.S."/>
            <person name="Zhan M."/>
            <person name="Zhang G."/>
            <person name="Zhao Q."/>
            <person name="Zheng L."/>
            <person name="Zheng X.H."/>
            <person name="Zhong F.N."/>
            <person name="Zhong W."/>
            <person name="Zhou X."/>
            <person name="Zhu S.C."/>
            <person name="Zhu X."/>
            <person name="Smith H.O."/>
            <person name="Gibbs R.A."/>
            <person name="Myers E.W."/>
            <person name="Rubin G.M."/>
            <person name="Venter J.C."/>
        </authorList>
    </citation>
    <scope>NUCLEOTIDE SEQUENCE [LARGE SCALE GENOMIC DNA]</scope>
    <source>
        <strain evidence="18">Berkeley</strain>
    </source>
</reference>
<reference evidence="18" key="3">
    <citation type="journal article" date="2002" name="Genome Biol.">
        <title>Annotation of the Drosophila melanogaster euchromatic genome: a systematic review.</title>
        <authorList>
            <person name="Misra S."/>
            <person name="Crosby M.A."/>
            <person name="Mungall C.J."/>
            <person name="Matthews B.B."/>
            <person name="Campbell K.S."/>
            <person name="Hradecky P."/>
            <person name="Huang Y."/>
            <person name="Kaminker J.S."/>
            <person name="Millburn G.H."/>
            <person name="Prochnik S.E."/>
            <person name="Smith C.D."/>
            <person name="Tupy J.L."/>
            <person name="Whitfield E.J."/>
            <person name="Bayraktaroglu L."/>
            <person name="Berman B.P."/>
            <person name="Bettencourt B.R."/>
            <person name="Celniker S.E."/>
            <person name="de Grey A.D.N.J."/>
            <person name="Drysdale R.A."/>
            <person name="Harris N.L."/>
            <person name="Richter J."/>
            <person name="Russo S."/>
            <person name="Schroeder A.J."/>
            <person name="Shu S.Q."/>
            <person name="Stapleton M."/>
            <person name="Yamada C."/>
            <person name="Ashburner M."/>
            <person name="Gelbart W.M."/>
            <person name="Rubin G.M."/>
            <person name="Lewis S.E."/>
        </authorList>
    </citation>
    <scope>GENOME REANNOTATION</scope>
    <source>
        <strain evidence="18">Berkeley</strain>
    </source>
</reference>
<reference evidence="15" key="4">
    <citation type="submission" date="2003-02" db="EMBL/GenBank/DDBJ databases">
        <authorList>
            <person name="Stapleton M."/>
            <person name="Brokstein P."/>
            <person name="Hong L."/>
            <person name="Agbayani A."/>
            <person name="Carlson J."/>
            <person name="Champe M."/>
            <person name="Chavez C."/>
            <person name="Dorsett V."/>
            <person name="Dresnek D."/>
            <person name="Farfan D."/>
            <person name="Frise E."/>
            <person name="George R."/>
            <person name="Gonzalez M."/>
            <person name="Guarin H."/>
            <person name="Kronmiller B."/>
            <person name="Li P."/>
            <person name="Liao G."/>
            <person name="Miranda A."/>
            <person name="Mungall C.J."/>
            <person name="Nunoo J."/>
            <person name="Pacleb J."/>
            <person name="Paragas V."/>
            <person name="Park S."/>
            <person name="Patel S."/>
            <person name="Phouanenavong S."/>
            <person name="Wan K."/>
            <person name="Yu C."/>
            <person name="Lewis S.E."/>
            <person name="Rubin G.M."/>
            <person name="Celniker S."/>
        </authorList>
    </citation>
    <scope>NUCLEOTIDE SEQUENCE [LARGE SCALE MRNA] (ISOFORM A)</scope>
    <source>
        <strain evidence="15">Berkeley</strain>
        <tissue evidence="15">Embryo</tissue>
    </source>
</reference>
<reference evidence="14" key="5">
    <citation type="journal article" date="2011" name="J. Genet. Genomics">
        <title>TRIM-9 functions in the UNC-6/UNC-40 pathway to regulate ventral guidance.</title>
        <authorList>
            <person name="Song S."/>
            <person name="Ge Q."/>
            <person name="Wang J."/>
            <person name="Chen H."/>
            <person name="Tang S."/>
            <person name="Bi J."/>
            <person name="Li X."/>
            <person name="Xie Q."/>
            <person name="Huang X."/>
        </authorList>
    </citation>
    <scope>FUNCTION</scope>
    <scope>DEVELOPMENTAL STAGE</scope>
    <scope>DISRUPTION PHENOTYPE</scope>
</reference>
<reference evidence="14" key="6">
    <citation type="journal article" date="2011" name="Proc. Natl. Acad. Sci. U.S.A.">
        <title>Different levels of the Tripartite motif protein, Anomalies in sensory axon patterning (Asap), regulate distinct axonal projections of Drosophila sensory neurons.</title>
        <authorList>
            <person name="Morikawa R.K."/>
            <person name="Kanamori T."/>
            <person name="Yasunaga K."/>
            <person name="Emoto K."/>
        </authorList>
    </citation>
    <scope>FUNCTION</scope>
    <scope>INTERACTION WITH PICO AND FRA</scope>
    <scope>SUBCELLULAR LOCATION</scope>
    <scope>DEVELOPMENTAL STAGE</scope>
    <scope>DOMAIN</scope>
    <scope>DISRUPTION PHENOTYPE</scope>
</reference>
<reference evidence="14" key="7">
    <citation type="journal article" date="2014" name="Curr. Biol.">
        <title>Trim9 regulates activity-dependent fine-scale topography in Drosophila.</title>
        <authorList>
            <person name="Yang L."/>
            <person name="Li R."/>
            <person name="Kaneko T."/>
            <person name="Takle K."/>
            <person name="Morikawa R.K."/>
            <person name="Essex L."/>
            <person name="Wang X."/>
            <person name="Zhou J."/>
            <person name="Emoto K."/>
            <person name="Xiang Y."/>
            <person name="Ye B."/>
        </authorList>
    </citation>
    <scope>FUNCTION</scope>
    <scope>DEVELOPMENTAL STAGE</scope>
    <scope>INDUCTION</scope>
    <scope>DISRUPTION PHENOTYPE</scope>
</reference>
<reference evidence="14" key="8">
    <citation type="journal article" date="2016" name="Elife">
        <title>Frazzled promotes growth cone attachment at the source of a Netrin gradient in the Drosophila visual system.</title>
        <authorList>
            <person name="Akin O."/>
            <person name="Zipursky S.L."/>
        </authorList>
    </citation>
    <scope>FUNCTION</scope>
    <scope>DISRUPTION PHENOTYPE</scope>
</reference>
<sequence length="740" mass="80192">MEDELRCPTCKQLYANPVLLPCFHALCLGCALDIQTPYSPGSALPGAVNGAGAASAAGHNGLHGNGGGAGGGAAAPVTNPNGPGTRHSSHSSAASTASSNTGSESVTSDQDQSDKVSIFSEADSGVVCCSNTSRPVSYAGTGLLPGVGNVVAPPGAAYCLTCPLCRKLVFFDDGGVRNLPTYRAMEAIVDRFCAREALRCQMCETDPKVASLICEQCEIRYCDACRELTHPARGPLAKHTLVKPRGAAQQRESVCGEHEETLSQYCLSCKAPACGLCIGELRHQAHDVQSINVTCKAQKTELSHNLQQLSEKARSTTEFIQRLKGMSDKVTESCMEFERLVHAQCEALIQAIHDRREYLLEAIRMDKDTKIRILKDQQSNCTGKLQQTTGLIQFCIEALKETDSAAFLQVGSMLINRVTNTDMTWHQEVTNAAPRVSPIVDLTLDDAALARAIDNLNFIQMRAVKDGDERCPAAPMTPTILPSDCSAENNSVTVAWQPPNHSFVEGYVLELDDGSGGEFREVYCGKETICTVDGLHFNSMYNARVKAFNSAGEGEYSELIGLQTAEVAWFTFDPVLSGGAGSGLIFSKNNATVSVEGWEHRVALGSVGFSRGVHYWEFTIDNYTADTDPAFGVARIDVARNKMLGKDEKSFAMYIDRQRSWFQHNSIHERRVEGGITTGSTIGVLLDLERHTLSFLVNEMPQGSVAFRDLYGVFYPAVSINRGVTLTMHTAMDAPKMDYF</sequence>
<organism evidence="18">
    <name type="scientific">Drosophila melanogaster</name>
    <name type="common">Fruit fly</name>
    <dbReference type="NCBI Taxonomy" id="7227"/>
    <lineage>
        <taxon>Eukaryota</taxon>
        <taxon>Metazoa</taxon>
        <taxon>Ecdysozoa</taxon>
        <taxon>Arthropoda</taxon>
        <taxon>Hexapoda</taxon>
        <taxon>Insecta</taxon>
        <taxon>Pterygota</taxon>
        <taxon>Neoptera</taxon>
        <taxon>Endopterygota</taxon>
        <taxon>Diptera</taxon>
        <taxon>Brachycera</taxon>
        <taxon>Muscomorpha</taxon>
        <taxon>Ephydroidea</taxon>
        <taxon>Drosophilidae</taxon>
        <taxon>Drosophila</taxon>
        <taxon>Sophophora</taxon>
    </lineage>
</organism>
<name>TRIM9_DROME</name>
<gene>
    <name evidence="17" type="primary">Trim9</name>
    <name evidence="17" type="ORF">CG31721</name>
</gene>
<protein>
    <recommendedName>
        <fullName evidence="14">E3 ubiquitin-protein ligase TRIM9</fullName>
        <ecNumber evidence="1">2.3.2.27</ecNumber>
    </recommendedName>
    <alternativeName>
        <fullName evidence="13">Anomalies in sensory axon patterning protein</fullName>
        <shortName evidence="13">asap</shortName>
    </alternativeName>
    <alternativeName>
        <fullName evidence="14">RING-type E3 ubiquitin transferase TRIM9</fullName>
    </alternativeName>
    <alternativeName>
        <fullName evidence="17">Tripartite motif containing protein 9</fullName>
    </alternativeName>
</protein>
<keyword id="KW-0025">Alternative splicing</keyword>
<keyword id="KW-0966">Cell projection</keyword>
<keyword id="KW-0175">Coiled coil</keyword>
<keyword id="KW-0479">Metal-binding</keyword>
<keyword id="KW-0524">Neurogenesis</keyword>
<keyword id="KW-1185">Reference proteome</keyword>
<keyword id="KW-0677">Repeat</keyword>
<keyword id="KW-0808">Transferase</keyword>
<keyword id="KW-0833">Ubl conjugation pathway</keyword>
<keyword id="KW-0862">Zinc</keyword>
<keyword id="KW-0863">Zinc-finger</keyword>